<feature type="chain" id="PRO_0000378609" description="DM7 family protein GM11958">
    <location>
        <begin position="1"/>
        <end position="493"/>
    </location>
</feature>
<feature type="region of interest" description="Disordered" evidence="2">
    <location>
        <begin position="434"/>
        <end position="493"/>
    </location>
</feature>
<feature type="compositionally biased region" description="Acidic residues" evidence="2">
    <location>
        <begin position="457"/>
        <end position="483"/>
    </location>
</feature>
<keyword id="KW-1185">Reference proteome</keyword>
<keyword id="KW-0677">Repeat</keyword>
<name>DM7B_DROSE</name>
<evidence type="ECO:0000255" key="1"/>
<evidence type="ECO:0000256" key="2">
    <source>
        <dbReference type="SAM" id="MobiDB-lite"/>
    </source>
</evidence>
<evidence type="ECO:0000312" key="3">
    <source>
        <dbReference type="EMBL" id="EDW53679.1"/>
    </source>
</evidence>
<gene>
    <name type="ORF">GM11958</name>
</gene>
<reference evidence="3" key="1">
    <citation type="journal article" date="2007" name="Nature">
        <title>Evolution of genes and genomes on the Drosophila phylogeny.</title>
        <authorList>
            <consortium name="Drosophila 12 genomes consortium"/>
        </authorList>
    </citation>
    <scope>NUCLEOTIDE SEQUENCE [LARGE SCALE GENOMIC DNA]</scope>
    <source>
        <strain evidence="3">Rob3c / Tucson 14021-0248.25</strain>
    </source>
</reference>
<sequence>MSKRAKKRDKLMVEIVQVYSASRDEEQVTDLKKTDYLPYLFNLVMPKQFYKSPNRIVMARLYPDVQKHDEQAAEYFEGFQTPCFDLPTNLFPEKAPIDKIVFMPKVMLPMGFEAGGVFGPGVLPRRCYPVDLISPDHKGPMPPLFVGLRGMNVSLSSMINTFLGMYDSSDGQEPHVYEMHATNHHYKNDLAPEELMLRPDFTLSVAYTLPASMCLPSPYPYPSVPAQDNIYTPDLSKVLILMPHQFNITVAILSTVNNPHDPSVAFATMGDDEDCPEFELPSDVFPICEGVNRPIFLPKRFMPKGFDACCVFKPGSLSELWYIKSIGRFGNPQDQYNCFITPPLFVGKYTRNAASINMLEEISVHFDQKDREIAKSLARLRLDALRLNSRNNTTKGFLVMESDKPTTPAGAYSVESYEKASEDGCIAKVTQECATKSTDTRDDGMNTADYQSQFPELEQDSEPEPEPEPEPQTEDEGEDEDIEILASLCSGSI</sequence>
<organism>
    <name type="scientific">Drosophila sechellia</name>
    <name type="common">Fruit fly</name>
    <dbReference type="NCBI Taxonomy" id="7238"/>
    <lineage>
        <taxon>Eukaryota</taxon>
        <taxon>Metazoa</taxon>
        <taxon>Ecdysozoa</taxon>
        <taxon>Arthropoda</taxon>
        <taxon>Hexapoda</taxon>
        <taxon>Insecta</taxon>
        <taxon>Pterygota</taxon>
        <taxon>Neoptera</taxon>
        <taxon>Endopterygota</taxon>
        <taxon>Diptera</taxon>
        <taxon>Brachycera</taxon>
        <taxon>Muscomorpha</taxon>
        <taxon>Ephydroidea</taxon>
        <taxon>Drosophilidae</taxon>
        <taxon>Drosophila</taxon>
        <taxon>Sophophora</taxon>
    </lineage>
</organism>
<proteinExistence type="inferred from homology"/>
<comment type="similarity">
    <text evidence="1">Belongs to the DM7 family.</text>
</comment>
<protein>
    <recommendedName>
        <fullName>DM7 family protein GM11958</fullName>
    </recommendedName>
</protein>
<accession>B4IL62</accession>
<dbReference type="EMBL" id="CH480865">
    <property type="protein sequence ID" value="EDW53679.1"/>
    <property type="molecule type" value="Genomic_DNA"/>
</dbReference>
<dbReference type="RefSeq" id="XP_002044472.1">
    <property type="nucleotide sequence ID" value="XM_002044436.1"/>
</dbReference>
<dbReference type="EnsemblMetazoa" id="FBtr0194943">
    <property type="protein sequence ID" value="FBpp0193435"/>
    <property type="gene ID" value="FBgn0166899"/>
</dbReference>
<dbReference type="EnsemblMetazoa" id="XM_032724264.1">
    <property type="protein sequence ID" value="XP_032580155.1"/>
    <property type="gene ID" value="LOC6620264"/>
</dbReference>
<dbReference type="HOGENOM" id="CLU_477581_0_0_1"/>
<dbReference type="OMA" id="NTADYQS"/>
<dbReference type="PhylomeDB" id="B4IL62"/>
<dbReference type="Proteomes" id="UP000001292">
    <property type="component" value="Unassembled WGS sequence"/>
</dbReference>
<dbReference type="InterPro" id="IPR006610">
    <property type="entry name" value="DM7"/>
</dbReference>
<dbReference type="SMART" id="SM00688">
    <property type="entry name" value="DM7"/>
    <property type="match status" value="2"/>
</dbReference>